<name>AGM1_MOUSE</name>
<proteinExistence type="evidence at protein level"/>
<sequence length="542" mass="59453">MDLEAVCKRSALHAKPQGLILQYGTAGFRTNAQHLDHIMFRMGLLAVLRSKQTRSTIGVMVTASHNPEEDNGVKLVDPLGEMLAPSWEEHATCLASAEEQDVRQVLAAIVEKEAVDLTQTAFVVIARDTRPSSEKLSQSVIDGVTVLGGQFHDYGLLTTPQLHYMVYCRNSGGRYGQATVEGYCQKLSKAFVDLTNQVSCSGDVKRSVKVDCANGIGALKLREMEHYFSRGLSVLLFNDGTQGRLNHLCGADFVKSQQKPPQGIEMKSGERCCSFDGDADRIVYYYCDADGHFHLIDGDKIATLISSFLKELLLEIGESVNLGVVQTAYANGSSTRYLEEVMKVPVYCTKTGVKHLHHKAQEFDIGVYFEANGHGTALFSEAVEVKIKRLAQELDDGKGKAARTLASIIDLFNQAAGDAISDMLVIEAILALKGLTVQQWDAIYVDLPNRQLKVKVADRRVISTTDAERQAVTPPGLQEAINDLVKKYTLARAFVRPSGTEDIVRVYAEANSQESADRLAYEVSLLVFQLAGGIGERPQPTF</sequence>
<reference key="1">
    <citation type="journal article" date="2005" name="Science">
        <title>The transcriptional landscape of the mammalian genome.</title>
        <authorList>
            <person name="Carninci P."/>
            <person name="Kasukawa T."/>
            <person name="Katayama S."/>
            <person name="Gough J."/>
            <person name="Frith M.C."/>
            <person name="Maeda N."/>
            <person name="Oyama R."/>
            <person name="Ravasi T."/>
            <person name="Lenhard B."/>
            <person name="Wells C."/>
            <person name="Kodzius R."/>
            <person name="Shimokawa K."/>
            <person name="Bajic V.B."/>
            <person name="Brenner S.E."/>
            <person name="Batalov S."/>
            <person name="Forrest A.R."/>
            <person name="Zavolan M."/>
            <person name="Davis M.J."/>
            <person name="Wilming L.G."/>
            <person name="Aidinis V."/>
            <person name="Allen J.E."/>
            <person name="Ambesi-Impiombato A."/>
            <person name="Apweiler R."/>
            <person name="Aturaliya R.N."/>
            <person name="Bailey T.L."/>
            <person name="Bansal M."/>
            <person name="Baxter L."/>
            <person name="Beisel K.W."/>
            <person name="Bersano T."/>
            <person name="Bono H."/>
            <person name="Chalk A.M."/>
            <person name="Chiu K.P."/>
            <person name="Choudhary V."/>
            <person name="Christoffels A."/>
            <person name="Clutterbuck D.R."/>
            <person name="Crowe M.L."/>
            <person name="Dalla E."/>
            <person name="Dalrymple B.P."/>
            <person name="de Bono B."/>
            <person name="Della Gatta G."/>
            <person name="di Bernardo D."/>
            <person name="Down T."/>
            <person name="Engstrom P."/>
            <person name="Fagiolini M."/>
            <person name="Faulkner G."/>
            <person name="Fletcher C.F."/>
            <person name="Fukushima T."/>
            <person name="Furuno M."/>
            <person name="Futaki S."/>
            <person name="Gariboldi M."/>
            <person name="Georgii-Hemming P."/>
            <person name="Gingeras T.R."/>
            <person name="Gojobori T."/>
            <person name="Green R.E."/>
            <person name="Gustincich S."/>
            <person name="Harbers M."/>
            <person name="Hayashi Y."/>
            <person name="Hensch T.K."/>
            <person name="Hirokawa N."/>
            <person name="Hill D."/>
            <person name="Huminiecki L."/>
            <person name="Iacono M."/>
            <person name="Ikeo K."/>
            <person name="Iwama A."/>
            <person name="Ishikawa T."/>
            <person name="Jakt M."/>
            <person name="Kanapin A."/>
            <person name="Katoh M."/>
            <person name="Kawasawa Y."/>
            <person name="Kelso J."/>
            <person name="Kitamura H."/>
            <person name="Kitano H."/>
            <person name="Kollias G."/>
            <person name="Krishnan S.P."/>
            <person name="Kruger A."/>
            <person name="Kummerfeld S.K."/>
            <person name="Kurochkin I.V."/>
            <person name="Lareau L.F."/>
            <person name="Lazarevic D."/>
            <person name="Lipovich L."/>
            <person name="Liu J."/>
            <person name="Liuni S."/>
            <person name="McWilliam S."/>
            <person name="Madan Babu M."/>
            <person name="Madera M."/>
            <person name="Marchionni L."/>
            <person name="Matsuda H."/>
            <person name="Matsuzawa S."/>
            <person name="Miki H."/>
            <person name="Mignone F."/>
            <person name="Miyake S."/>
            <person name="Morris K."/>
            <person name="Mottagui-Tabar S."/>
            <person name="Mulder N."/>
            <person name="Nakano N."/>
            <person name="Nakauchi H."/>
            <person name="Ng P."/>
            <person name="Nilsson R."/>
            <person name="Nishiguchi S."/>
            <person name="Nishikawa S."/>
            <person name="Nori F."/>
            <person name="Ohara O."/>
            <person name="Okazaki Y."/>
            <person name="Orlando V."/>
            <person name="Pang K.C."/>
            <person name="Pavan W.J."/>
            <person name="Pavesi G."/>
            <person name="Pesole G."/>
            <person name="Petrovsky N."/>
            <person name="Piazza S."/>
            <person name="Reed J."/>
            <person name="Reid J.F."/>
            <person name="Ring B.Z."/>
            <person name="Ringwald M."/>
            <person name="Rost B."/>
            <person name="Ruan Y."/>
            <person name="Salzberg S.L."/>
            <person name="Sandelin A."/>
            <person name="Schneider C."/>
            <person name="Schoenbach C."/>
            <person name="Sekiguchi K."/>
            <person name="Semple C.A."/>
            <person name="Seno S."/>
            <person name="Sessa L."/>
            <person name="Sheng Y."/>
            <person name="Shibata Y."/>
            <person name="Shimada H."/>
            <person name="Shimada K."/>
            <person name="Silva D."/>
            <person name="Sinclair B."/>
            <person name="Sperling S."/>
            <person name="Stupka E."/>
            <person name="Sugiura K."/>
            <person name="Sultana R."/>
            <person name="Takenaka Y."/>
            <person name="Taki K."/>
            <person name="Tammoja K."/>
            <person name="Tan S.L."/>
            <person name="Tang S."/>
            <person name="Taylor M.S."/>
            <person name="Tegner J."/>
            <person name="Teichmann S.A."/>
            <person name="Ueda H.R."/>
            <person name="van Nimwegen E."/>
            <person name="Verardo R."/>
            <person name="Wei C.L."/>
            <person name="Yagi K."/>
            <person name="Yamanishi H."/>
            <person name="Zabarovsky E."/>
            <person name="Zhu S."/>
            <person name="Zimmer A."/>
            <person name="Hide W."/>
            <person name="Bult C."/>
            <person name="Grimmond S.M."/>
            <person name="Teasdale R.D."/>
            <person name="Liu E.T."/>
            <person name="Brusic V."/>
            <person name="Quackenbush J."/>
            <person name="Wahlestedt C."/>
            <person name="Mattick J.S."/>
            <person name="Hume D.A."/>
            <person name="Kai C."/>
            <person name="Sasaki D."/>
            <person name="Tomaru Y."/>
            <person name="Fukuda S."/>
            <person name="Kanamori-Katayama M."/>
            <person name="Suzuki M."/>
            <person name="Aoki J."/>
            <person name="Arakawa T."/>
            <person name="Iida J."/>
            <person name="Imamura K."/>
            <person name="Itoh M."/>
            <person name="Kato T."/>
            <person name="Kawaji H."/>
            <person name="Kawagashira N."/>
            <person name="Kawashima T."/>
            <person name="Kojima M."/>
            <person name="Kondo S."/>
            <person name="Konno H."/>
            <person name="Nakano K."/>
            <person name="Ninomiya N."/>
            <person name="Nishio T."/>
            <person name="Okada M."/>
            <person name="Plessy C."/>
            <person name="Shibata K."/>
            <person name="Shiraki T."/>
            <person name="Suzuki S."/>
            <person name="Tagami M."/>
            <person name="Waki K."/>
            <person name="Watahiki A."/>
            <person name="Okamura-Oho Y."/>
            <person name="Suzuki H."/>
            <person name="Kawai J."/>
            <person name="Hayashizaki Y."/>
        </authorList>
    </citation>
    <scope>NUCLEOTIDE SEQUENCE [LARGE SCALE MRNA]</scope>
    <source>
        <strain>C57BL/6J</strain>
        <strain>NOD</strain>
        <tissue>Cerebellum</tissue>
        <tissue>Embryo</tissue>
        <tissue>Heart</tissue>
        <tissue>Kidney</tissue>
        <tissue>Placenta</tissue>
        <tissue>Spinal ganglion</tissue>
        <tissue>Thymus</tissue>
    </source>
</reference>
<reference key="2">
    <citation type="journal article" date="2004" name="Genome Res.">
        <title>The status, quality, and expansion of the NIH full-length cDNA project: the Mammalian Gene Collection (MGC).</title>
        <authorList>
            <consortium name="The MGC Project Team"/>
        </authorList>
    </citation>
    <scope>NUCLEOTIDE SEQUENCE [LARGE SCALE MRNA]</scope>
    <source>
        <tissue>Brain</tissue>
    </source>
</reference>
<reference key="3">
    <citation type="journal article" date="2007" name="Proc. Natl. Acad. Sci. U.S.A.">
        <title>Large-scale phosphorylation analysis of mouse liver.</title>
        <authorList>
            <person name="Villen J."/>
            <person name="Beausoleil S.A."/>
            <person name="Gerber S.A."/>
            <person name="Gygi S.P."/>
        </authorList>
    </citation>
    <scope>IDENTIFICATION BY MASS SPECTROMETRY [LARGE SCALE ANALYSIS]</scope>
    <source>
        <tissue>Liver</tissue>
    </source>
</reference>
<reference key="4">
    <citation type="journal article" date="2010" name="Cell">
        <title>A tissue-specific atlas of mouse protein phosphorylation and expression.</title>
        <authorList>
            <person name="Huttlin E.L."/>
            <person name="Jedrychowski M.P."/>
            <person name="Elias J.E."/>
            <person name="Goswami T."/>
            <person name="Rad R."/>
            <person name="Beausoleil S.A."/>
            <person name="Villen J."/>
            <person name="Haas W."/>
            <person name="Sowa M.E."/>
            <person name="Gygi S.P."/>
        </authorList>
    </citation>
    <scope>PHOSPHORYLATION [LARGE SCALE ANALYSIS] AT THR-62 AND SER-64</scope>
    <scope>IDENTIFICATION BY MASS SPECTROMETRY [LARGE SCALE ANALYSIS]</scope>
    <source>
        <tissue>Brain</tissue>
        <tissue>Brown adipose tissue</tissue>
        <tissue>Heart</tissue>
        <tissue>Kidney</tissue>
        <tissue>Liver</tissue>
        <tissue>Lung</tissue>
        <tissue>Pancreas</tissue>
        <tissue>Spleen</tissue>
        <tissue>Testis</tissue>
    </source>
</reference>
<reference key="5">
    <citation type="submission" date="2006-01" db="PDB data bank">
        <title>Solution structure of the C-terminal domain of mouse phosphoacetylglucosamine mutase (PAGM).</title>
        <authorList>
            <consortium name="RIKEN structural genomics initiative (RSGI)"/>
        </authorList>
    </citation>
    <scope>STRUCTURE BY NMR OF 442-540</scope>
</reference>
<accession>Q9CYR6</accession>
<accession>B2RS40</accession>
<accession>Q543F9</accession>
<organism>
    <name type="scientific">Mus musculus</name>
    <name type="common">Mouse</name>
    <dbReference type="NCBI Taxonomy" id="10090"/>
    <lineage>
        <taxon>Eukaryota</taxon>
        <taxon>Metazoa</taxon>
        <taxon>Chordata</taxon>
        <taxon>Craniata</taxon>
        <taxon>Vertebrata</taxon>
        <taxon>Euteleostomi</taxon>
        <taxon>Mammalia</taxon>
        <taxon>Eutheria</taxon>
        <taxon>Euarchontoglires</taxon>
        <taxon>Glires</taxon>
        <taxon>Rodentia</taxon>
        <taxon>Myomorpha</taxon>
        <taxon>Muroidea</taxon>
        <taxon>Muridae</taxon>
        <taxon>Murinae</taxon>
        <taxon>Mus</taxon>
        <taxon>Mus</taxon>
    </lineage>
</organism>
<comment type="function">
    <text evidence="1">Catalyzes the conversion of GlcNAc-6-P into GlcNAc-1-P during the synthesis of uridine diphosphate/UDP-GlcNAc, a sugar nucleotide critical to multiple glycosylation pathways including protein N- and O-glycosylation.</text>
</comment>
<comment type="catalytic activity">
    <reaction evidence="1">
        <text>N-acetyl-alpha-D-glucosamine 1-phosphate = N-acetyl-D-glucosamine 6-phosphate</text>
        <dbReference type="Rhea" id="RHEA:23804"/>
        <dbReference type="ChEBI" id="CHEBI:57513"/>
        <dbReference type="ChEBI" id="CHEBI:57776"/>
        <dbReference type="EC" id="5.4.2.3"/>
    </reaction>
</comment>
<comment type="cofactor">
    <cofactor evidence="2">
        <name>Mg(2+)</name>
        <dbReference type="ChEBI" id="CHEBI:18420"/>
    </cofactor>
    <text evidence="2">Binds 1 Mg(2+) ion per subunit.</text>
</comment>
<comment type="pathway">
    <text evidence="1">Nucleotide-sugar biosynthesis; UDP-N-acetyl-alpha-D-glucosamine biosynthesis; N-acetyl-alpha-D-glucosamine 1-phosphate from alpha-D-glucosamine 6-phosphate (route I): step 2/2.</text>
</comment>
<comment type="similarity">
    <text evidence="3">Belongs to the phosphohexose mutase family.</text>
</comment>
<evidence type="ECO:0000250" key="1">
    <source>
        <dbReference type="UniProtKB" id="O95394"/>
    </source>
</evidence>
<evidence type="ECO:0000250" key="2">
    <source>
        <dbReference type="UniProtKB" id="Q9P4V2"/>
    </source>
</evidence>
<evidence type="ECO:0000305" key="3"/>
<evidence type="ECO:0000312" key="4">
    <source>
        <dbReference type="MGI" id="MGI:97566"/>
    </source>
</evidence>
<evidence type="ECO:0007744" key="5">
    <source>
    </source>
</evidence>
<evidence type="ECO:0007829" key="6">
    <source>
        <dbReference type="PDB" id="1WJW"/>
    </source>
</evidence>
<keyword id="KW-0002">3D-structure</keyword>
<keyword id="KW-0007">Acetylation</keyword>
<keyword id="KW-0119">Carbohydrate metabolism</keyword>
<keyword id="KW-0413">Isomerase</keyword>
<keyword id="KW-0460">Magnesium</keyword>
<keyword id="KW-0479">Metal-binding</keyword>
<keyword id="KW-0597">Phosphoprotein</keyword>
<keyword id="KW-1185">Reference proteome</keyword>
<feature type="chain" id="PRO_0000148014" description="Phosphoacetylglucosamine mutase">
    <location>
        <begin position="1"/>
        <end position="542"/>
    </location>
</feature>
<feature type="active site" description="Phosphoserine intermediate" evidence="2">
    <location>
        <position position="64"/>
    </location>
</feature>
<feature type="binding site" description="via phosphate group" evidence="2">
    <location>
        <position position="64"/>
    </location>
    <ligand>
        <name>Mg(2+)</name>
        <dbReference type="ChEBI" id="CHEBI:18420"/>
    </ligand>
</feature>
<feature type="binding site" evidence="2">
    <location>
        <position position="276"/>
    </location>
    <ligand>
        <name>Mg(2+)</name>
        <dbReference type="ChEBI" id="CHEBI:18420"/>
    </ligand>
</feature>
<feature type="binding site" evidence="2">
    <location>
        <position position="278"/>
    </location>
    <ligand>
        <name>Mg(2+)</name>
        <dbReference type="ChEBI" id="CHEBI:18420"/>
    </ligand>
</feature>
<feature type="binding site" evidence="2">
    <location>
        <position position="280"/>
    </location>
    <ligand>
        <name>Mg(2+)</name>
        <dbReference type="ChEBI" id="CHEBI:18420"/>
    </ligand>
</feature>
<feature type="binding site" evidence="2">
    <location>
        <begin position="370"/>
        <end position="372"/>
    </location>
    <ligand>
        <name>substrate</name>
    </ligand>
</feature>
<feature type="binding site" evidence="2">
    <location>
        <begin position="496"/>
        <end position="500"/>
    </location>
    <ligand>
        <name>substrate</name>
    </ligand>
</feature>
<feature type="binding site" evidence="2">
    <location>
        <position position="505"/>
    </location>
    <ligand>
        <name>substrate</name>
    </ligand>
</feature>
<feature type="modified residue" description="N-acetylmethionine" evidence="1">
    <location>
        <position position="1"/>
    </location>
</feature>
<feature type="modified residue" description="Phosphothreonine" evidence="5">
    <location>
        <position position="62"/>
    </location>
</feature>
<feature type="modified residue" description="Phosphoserine" evidence="5">
    <location>
        <position position="64"/>
    </location>
</feature>
<feature type="strand" evidence="6">
    <location>
        <begin position="449"/>
        <end position="454"/>
    </location>
</feature>
<feature type="strand" evidence="6">
    <location>
        <begin position="459"/>
        <end position="462"/>
    </location>
</feature>
<feature type="strand" evidence="6">
    <location>
        <begin position="470"/>
        <end position="474"/>
    </location>
</feature>
<feature type="helix" evidence="6">
    <location>
        <begin position="477"/>
        <end position="487"/>
    </location>
</feature>
<feature type="strand" evidence="6">
    <location>
        <begin position="488"/>
        <end position="496"/>
    </location>
</feature>
<feature type="strand" evidence="6">
    <location>
        <begin position="498"/>
        <end position="512"/>
    </location>
</feature>
<feature type="helix" evidence="6">
    <location>
        <begin position="513"/>
        <end position="530"/>
    </location>
</feature>
<dbReference type="EC" id="5.4.2.3" evidence="1"/>
<dbReference type="EMBL" id="AK013402">
    <property type="protein sequence ID" value="BAB28834.1"/>
    <property type="molecule type" value="mRNA"/>
</dbReference>
<dbReference type="EMBL" id="AK028066">
    <property type="protein sequence ID" value="BAC25733.1"/>
    <property type="molecule type" value="mRNA"/>
</dbReference>
<dbReference type="EMBL" id="AK049337">
    <property type="protein sequence ID" value="BAC33692.1"/>
    <property type="molecule type" value="mRNA"/>
</dbReference>
<dbReference type="EMBL" id="AK051706">
    <property type="protein sequence ID" value="BAC34728.1"/>
    <property type="molecule type" value="mRNA"/>
</dbReference>
<dbReference type="EMBL" id="AK160913">
    <property type="protein sequence ID" value="BAE36087.1"/>
    <property type="molecule type" value="mRNA"/>
</dbReference>
<dbReference type="EMBL" id="AK165513">
    <property type="protein sequence ID" value="BAE38229.1"/>
    <property type="molecule type" value="mRNA"/>
</dbReference>
<dbReference type="EMBL" id="AK169082">
    <property type="protein sequence ID" value="BAE40866.1"/>
    <property type="molecule type" value="mRNA"/>
</dbReference>
<dbReference type="EMBL" id="AK169787">
    <property type="protein sequence ID" value="BAE41366.1"/>
    <property type="molecule type" value="mRNA"/>
</dbReference>
<dbReference type="EMBL" id="BC138700">
    <property type="protein sequence ID" value="AAI38701.1"/>
    <property type="molecule type" value="mRNA"/>
</dbReference>
<dbReference type="CCDS" id="CCDS23381.1"/>
<dbReference type="RefSeq" id="NP_001157218.1">
    <property type="nucleotide sequence ID" value="NM_001163746.1"/>
</dbReference>
<dbReference type="RefSeq" id="NP_082628.3">
    <property type="nucleotide sequence ID" value="NM_028352.4"/>
</dbReference>
<dbReference type="PDB" id="1WJW">
    <property type="method" value="NMR"/>
    <property type="chains" value="A=442-540"/>
</dbReference>
<dbReference type="PDBsum" id="1WJW"/>
<dbReference type="BMRB" id="Q9CYR6"/>
<dbReference type="SMR" id="Q9CYR6"/>
<dbReference type="BioGRID" id="225039">
    <property type="interactions" value="3"/>
</dbReference>
<dbReference type="FunCoup" id="Q9CYR6">
    <property type="interactions" value="2045"/>
</dbReference>
<dbReference type="STRING" id="10090.ENSMUSP00000070871"/>
<dbReference type="GlyGen" id="Q9CYR6">
    <property type="glycosylation" value="2 sites, 1 O-linked glycan (1 site)"/>
</dbReference>
<dbReference type="iPTMnet" id="Q9CYR6"/>
<dbReference type="PhosphoSitePlus" id="Q9CYR6"/>
<dbReference type="SwissPalm" id="Q9CYR6"/>
<dbReference type="jPOST" id="Q9CYR6"/>
<dbReference type="PaxDb" id="10090-ENSMUSP00000070871"/>
<dbReference type="ProteomicsDB" id="285566"/>
<dbReference type="Pumba" id="Q9CYR6"/>
<dbReference type="Antibodypedia" id="31667">
    <property type="antibodies" value="284 antibodies from 25 providers"/>
</dbReference>
<dbReference type="DNASU" id="109785"/>
<dbReference type="Ensembl" id="ENSMUST00000070064.11">
    <property type="protein sequence ID" value="ENSMUSP00000070871.5"/>
    <property type="gene ID" value="ENSMUSG00000056131.14"/>
</dbReference>
<dbReference type="GeneID" id="109785"/>
<dbReference type="KEGG" id="mmu:109785"/>
<dbReference type="UCSC" id="uc009qxm.2">
    <property type="organism name" value="mouse"/>
</dbReference>
<dbReference type="AGR" id="MGI:97566"/>
<dbReference type="CTD" id="5238"/>
<dbReference type="MGI" id="MGI:97566">
    <property type="gene designation" value="Pgm3"/>
</dbReference>
<dbReference type="VEuPathDB" id="HostDB:ENSMUSG00000056131"/>
<dbReference type="eggNOG" id="KOG2537">
    <property type="taxonomic scope" value="Eukaryota"/>
</dbReference>
<dbReference type="GeneTree" id="ENSGT00390000000509"/>
<dbReference type="HOGENOM" id="CLU_022890_1_0_1"/>
<dbReference type="InParanoid" id="Q9CYR6"/>
<dbReference type="OMA" id="WEAYATK"/>
<dbReference type="OrthoDB" id="1928at2759"/>
<dbReference type="PhylomeDB" id="Q9CYR6"/>
<dbReference type="TreeFam" id="TF105670"/>
<dbReference type="Reactome" id="R-MMU-446210">
    <property type="pathway name" value="Synthesis of UDP-N-acetyl-glucosamine"/>
</dbReference>
<dbReference type="UniPathway" id="UPA00113">
    <property type="reaction ID" value="UER00530"/>
</dbReference>
<dbReference type="BioGRID-ORCS" id="109785">
    <property type="hits" value="25 hits in 77 CRISPR screens"/>
</dbReference>
<dbReference type="EvolutionaryTrace" id="Q9CYR6"/>
<dbReference type="PRO" id="PR:Q9CYR6"/>
<dbReference type="Proteomes" id="UP000000589">
    <property type="component" value="Chromosome 9"/>
</dbReference>
<dbReference type="RNAct" id="Q9CYR6">
    <property type="molecule type" value="protein"/>
</dbReference>
<dbReference type="Bgee" id="ENSMUSG00000056131">
    <property type="expression patterns" value="Expressed in epithelium of small intestine and 227 other cell types or tissues"/>
</dbReference>
<dbReference type="ExpressionAtlas" id="Q9CYR6">
    <property type="expression patterns" value="baseline and differential"/>
</dbReference>
<dbReference type="GO" id="GO:0000287">
    <property type="term" value="F:magnesium ion binding"/>
    <property type="evidence" value="ECO:0007669"/>
    <property type="project" value="InterPro"/>
</dbReference>
<dbReference type="GO" id="GO:0004610">
    <property type="term" value="F:phosphoacetylglucosamine mutase activity"/>
    <property type="evidence" value="ECO:0000315"/>
    <property type="project" value="MGI"/>
</dbReference>
<dbReference type="GO" id="GO:0005975">
    <property type="term" value="P:carbohydrate metabolic process"/>
    <property type="evidence" value="ECO:0007669"/>
    <property type="project" value="InterPro"/>
</dbReference>
<dbReference type="GO" id="GO:0030097">
    <property type="term" value="P:hemopoiesis"/>
    <property type="evidence" value="ECO:0000315"/>
    <property type="project" value="MGI"/>
</dbReference>
<dbReference type="GO" id="GO:0006487">
    <property type="term" value="P:protein N-linked glycosylation"/>
    <property type="evidence" value="ECO:0000250"/>
    <property type="project" value="UniProtKB"/>
</dbReference>
<dbReference type="GO" id="GO:0006493">
    <property type="term" value="P:protein O-linked glycosylation"/>
    <property type="evidence" value="ECO:0000250"/>
    <property type="project" value="UniProtKB"/>
</dbReference>
<dbReference type="GO" id="GO:0007283">
    <property type="term" value="P:spermatogenesis"/>
    <property type="evidence" value="ECO:0000315"/>
    <property type="project" value="MGI"/>
</dbReference>
<dbReference type="GO" id="GO:0006048">
    <property type="term" value="P:UDP-N-acetylglucosamine biosynthetic process"/>
    <property type="evidence" value="ECO:0000315"/>
    <property type="project" value="MGI"/>
</dbReference>
<dbReference type="CDD" id="cd03086">
    <property type="entry name" value="PGM3"/>
    <property type="match status" value="1"/>
</dbReference>
<dbReference type="FunFam" id="3.30.310.50:FF:000003">
    <property type="entry name" value="Phosphoacetylglucosamine mutase"/>
    <property type="match status" value="1"/>
</dbReference>
<dbReference type="FunFam" id="3.40.120.10:FF:000013">
    <property type="entry name" value="Phosphoacetylglucosamine mutase"/>
    <property type="match status" value="1"/>
</dbReference>
<dbReference type="FunFam" id="3.40.120.10:FF:000015">
    <property type="entry name" value="Phosphoacetylglucosamine mutase"/>
    <property type="match status" value="1"/>
</dbReference>
<dbReference type="FunFam" id="3.40.120.10:FF:000019">
    <property type="entry name" value="Phosphoacetylglucosamine mutase"/>
    <property type="match status" value="1"/>
</dbReference>
<dbReference type="Gene3D" id="3.40.120.10">
    <property type="entry name" value="Alpha-D-Glucose-1,6-Bisphosphate, subunit A, domain 3"/>
    <property type="match status" value="3"/>
</dbReference>
<dbReference type="Gene3D" id="3.30.310.50">
    <property type="entry name" value="Alpha-D-phosphohexomutase, C-terminal domain"/>
    <property type="match status" value="1"/>
</dbReference>
<dbReference type="InterPro" id="IPR005844">
    <property type="entry name" value="A-D-PHexomutase_a/b/a-I"/>
</dbReference>
<dbReference type="InterPro" id="IPR016055">
    <property type="entry name" value="A-D-PHexomutase_a/b/a-I/II/III"/>
</dbReference>
<dbReference type="InterPro" id="IPR005843">
    <property type="entry name" value="A-D-PHexomutase_C"/>
</dbReference>
<dbReference type="InterPro" id="IPR036900">
    <property type="entry name" value="A-D-PHexomutase_C_sf"/>
</dbReference>
<dbReference type="InterPro" id="IPR016066">
    <property type="entry name" value="A-D-PHexomutase_CS"/>
</dbReference>
<dbReference type="InterPro" id="IPR049023">
    <property type="entry name" value="AMG1_II"/>
</dbReference>
<dbReference type="InterPro" id="IPR049022">
    <property type="entry name" value="AMG1_III"/>
</dbReference>
<dbReference type="InterPro" id="IPR016657">
    <property type="entry name" value="PAGM"/>
</dbReference>
<dbReference type="PANTHER" id="PTHR45955">
    <property type="entry name" value="PHOSPHOACETYLGLUCOSAMINE MUTASE"/>
    <property type="match status" value="1"/>
</dbReference>
<dbReference type="PANTHER" id="PTHR45955:SF1">
    <property type="entry name" value="PHOSPHOACETYLGLUCOSAMINE MUTASE"/>
    <property type="match status" value="1"/>
</dbReference>
<dbReference type="Pfam" id="PF21405">
    <property type="entry name" value="AMG1_II"/>
    <property type="match status" value="1"/>
</dbReference>
<dbReference type="Pfam" id="PF21404">
    <property type="entry name" value="AMG1_III"/>
    <property type="match status" value="1"/>
</dbReference>
<dbReference type="Pfam" id="PF02878">
    <property type="entry name" value="PGM_PMM_I"/>
    <property type="match status" value="2"/>
</dbReference>
<dbReference type="Pfam" id="PF00408">
    <property type="entry name" value="PGM_PMM_IV"/>
    <property type="match status" value="1"/>
</dbReference>
<dbReference type="PIRSF" id="PIRSF016408">
    <property type="entry name" value="PAGM"/>
    <property type="match status" value="1"/>
</dbReference>
<dbReference type="SUPFAM" id="SSF55957">
    <property type="entry name" value="Phosphoglucomutase, C-terminal domain"/>
    <property type="match status" value="1"/>
</dbReference>
<dbReference type="SUPFAM" id="SSF53738">
    <property type="entry name" value="Phosphoglucomutase, first 3 domains"/>
    <property type="match status" value="4"/>
</dbReference>
<dbReference type="PROSITE" id="PS00710">
    <property type="entry name" value="PGM_PMM"/>
    <property type="match status" value="1"/>
</dbReference>
<protein>
    <recommendedName>
        <fullName evidence="3">Phosphoacetylglucosamine mutase</fullName>
        <shortName>PAGM</shortName>
        <ecNumber evidence="1">5.4.2.3</ecNumber>
    </recommendedName>
    <alternativeName>
        <fullName evidence="3">Acetylglucosamine phosphomutase</fullName>
    </alternativeName>
    <alternativeName>
        <fullName evidence="3">N-acetylglucosamine-phosphate mutase</fullName>
    </alternativeName>
    <alternativeName>
        <fullName evidence="4">Phosphoglucomutase-3</fullName>
        <shortName>PGM 3</shortName>
    </alternativeName>
</protein>
<gene>
    <name evidence="4" type="primary">Pgm3</name>
    <name type="synonym">Agm1</name>
    <name type="synonym">Pgm-3</name>
</gene>